<accession>A4WFB9</accession>
<gene>
    <name evidence="1" type="primary">rpsQ</name>
    <name type="ordered locus">Ent638_3742</name>
</gene>
<comment type="function">
    <text evidence="1">One of the primary rRNA binding proteins, it binds specifically to the 5'-end of 16S ribosomal RNA.</text>
</comment>
<comment type="subunit">
    <text evidence="1">Part of the 30S ribosomal subunit.</text>
</comment>
<comment type="similarity">
    <text evidence="1">Belongs to the universal ribosomal protein uS17 family.</text>
</comment>
<proteinExistence type="inferred from homology"/>
<protein>
    <recommendedName>
        <fullName evidence="1">Small ribosomal subunit protein uS17</fullName>
    </recommendedName>
    <alternativeName>
        <fullName evidence="2">30S ribosomal protein S17</fullName>
    </alternativeName>
</protein>
<keyword id="KW-0687">Ribonucleoprotein</keyword>
<keyword id="KW-0689">Ribosomal protein</keyword>
<keyword id="KW-0694">RNA-binding</keyword>
<keyword id="KW-0699">rRNA-binding</keyword>
<evidence type="ECO:0000255" key="1">
    <source>
        <dbReference type="HAMAP-Rule" id="MF_01345"/>
    </source>
</evidence>
<evidence type="ECO:0000305" key="2"/>
<sequence length="84" mass="9651">MTDKIRTLQGRVVSDKMEKSIVVAIERIVKHPIYGKFIKRTTKLHVHDENNECGIGDVVEIHECRPLSKTKSWTLVRVVEKAVL</sequence>
<dbReference type="EMBL" id="CP000653">
    <property type="protein sequence ID" value="ABP62399.1"/>
    <property type="molecule type" value="Genomic_DNA"/>
</dbReference>
<dbReference type="RefSeq" id="WP_015960713.1">
    <property type="nucleotide sequence ID" value="NC_009436.1"/>
</dbReference>
<dbReference type="SMR" id="A4WFB9"/>
<dbReference type="STRING" id="399742.Ent638_3742"/>
<dbReference type="GeneID" id="93306717"/>
<dbReference type="KEGG" id="ent:Ent638_3742"/>
<dbReference type="eggNOG" id="COG0186">
    <property type="taxonomic scope" value="Bacteria"/>
</dbReference>
<dbReference type="HOGENOM" id="CLU_073626_1_1_6"/>
<dbReference type="OrthoDB" id="9811714at2"/>
<dbReference type="Proteomes" id="UP000000230">
    <property type="component" value="Chromosome"/>
</dbReference>
<dbReference type="GO" id="GO:0022627">
    <property type="term" value="C:cytosolic small ribosomal subunit"/>
    <property type="evidence" value="ECO:0007669"/>
    <property type="project" value="TreeGrafter"/>
</dbReference>
<dbReference type="GO" id="GO:0019843">
    <property type="term" value="F:rRNA binding"/>
    <property type="evidence" value="ECO:0007669"/>
    <property type="project" value="UniProtKB-UniRule"/>
</dbReference>
<dbReference type="GO" id="GO:0003735">
    <property type="term" value="F:structural constituent of ribosome"/>
    <property type="evidence" value="ECO:0007669"/>
    <property type="project" value="InterPro"/>
</dbReference>
<dbReference type="GO" id="GO:0006412">
    <property type="term" value="P:translation"/>
    <property type="evidence" value="ECO:0007669"/>
    <property type="project" value="UniProtKB-UniRule"/>
</dbReference>
<dbReference type="CDD" id="cd00364">
    <property type="entry name" value="Ribosomal_uS17"/>
    <property type="match status" value="1"/>
</dbReference>
<dbReference type="FunFam" id="2.40.50.140:FF:000014">
    <property type="entry name" value="30S ribosomal protein S17"/>
    <property type="match status" value="1"/>
</dbReference>
<dbReference type="Gene3D" id="2.40.50.140">
    <property type="entry name" value="Nucleic acid-binding proteins"/>
    <property type="match status" value="1"/>
</dbReference>
<dbReference type="HAMAP" id="MF_01345_B">
    <property type="entry name" value="Ribosomal_uS17_B"/>
    <property type="match status" value="1"/>
</dbReference>
<dbReference type="InterPro" id="IPR012340">
    <property type="entry name" value="NA-bd_OB-fold"/>
</dbReference>
<dbReference type="InterPro" id="IPR000266">
    <property type="entry name" value="Ribosomal_uS17"/>
</dbReference>
<dbReference type="InterPro" id="IPR019984">
    <property type="entry name" value="Ribosomal_uS17_bact/chlr"/>
</dbReference>
<dbReference type="InterPro" id="IPR019979">
    <property type="entry name" value="Ribosomal_uS17_CS"/>
</dbReference>
<dbReference type="NCBIfam" id="NF004123">
    <property type="entry name" value="PRK05610.1"/>
    <property type="match status" value="1"/>
</dbReference>
<dbReference type="NCBIfam" id="TIGR03635">
    <property type="entry name" value="uS17_bact"/>
    <property type="match status" value="1"/>
</dbReference>
<dbReference type="PANTHER" id="PTHR10744">
    <property type="entry name" value="40S RIBOSOMAL PROTEIN S11 FAMILY MEMBER"/>
    <property type="match status" value="1"/>
</dbReference>
<dbReference type="PANTHER" id="PTHR10744:SF1">
    <property type="entry name" value="SMALL RIBOSOMAL SUBUNIT PROTEIN US17M"/>
    <property type="match status" value="1"/>
</dbReference>
<dbReference type="Pfam" id="PF00366">
    <property type="entry name" value="Ribosomal_S17"/>
    <property type="match status" value="1"/>
</dbReference>
<dbReference type="PRINTS" id="PR00973">
    <property type="entry name" value="RIBOSOMALS17"/>
</dbReference>
<dbReference type="SUPFAM" id="SSF50249">
    <property type="entry name" value="Nucleic acid-binding proteins"/>
    <property type="match status" value="1"/>
</dbReference>
<dbReference type="PROSITE" id="PS00056">
    <property type="entry name" value="RIBOSOMAL_S17"/>
    <property type="match status" value="1"/>
</dbReference>
<organism>
    <name type="scientific">Enterobacter sp. (strain 638)</name>
    <dbReference type="NCBI Taxonomy" id="399742"/>
    <lineage>
        <taxon>Bacteria</taxon>
        <taxon>Pseudomonadati</taxon>
        <taxon>Pseudomonadota</taxon>
        <taxon>Gammaproteobacteria</taxon>
        <taxon>Enterobacterales</taxon>
        <taxon>Enterobacteriaceae</taxon>
        <taxon>Enterobacter</taxon>
    </lineage>
</organism>
<reference key="1">
    <citation type="journal article" date="2010" name="PLoS Genet.">
        <title>Genome sequence of the plant growth promoting endophytic bacterium Enterobacter sp. 638.</title>
        <authorList>
            <person name="Taghavi S."/>
            <person name="van der Lelie D."/>
            <person name="Hoffman A."/>
            <person name="Zhang Y.B."/>
            <person name="Walla M.D."/>
            <person name="Vangronsveld J."/>
            <person name="Newman L."/>
            <person name="Monchy S."/>
        </authorList>
    </citation>
    <scope>NUCLEOTIDE SEQUENCE [LARGE SCALE GENOMIC DNA]</scope>
    <source>
        <strain>638</strain>
    </source>
</reference>
<name>RS17_ENT38</name>
<feature type="chain" id="PRO_1000067702" description="Small ribosomal subunit protein uS17">
    <location>
        <begin position="1"/>
        <end position="84"/>
    </location>
</feature>